<gene>
    <name type="primary">HRT1</name>
    <name type="synonym">RBX1</name>
    <name type="synonym">ROC1</name>
    <name type="ordered locus">YOL133W</name>
</gene>
<feature type="chain" id="PRO_0000056022" description="RING-box protein HRT1">
    <location>
        <begin position="1"/>
        <end position="121"/>
    </location>
</feature>
<feature type="zinc finger region" description="RING-type" evidence="2">
    <location>
        <begin position="55"/>
        <end position="111"/>
    </location>
</feature>
<feature type="region of interest" description="Disordered" evidence="3">
    <location>
        <begin position="1"/>
        <end position="31"/>
    </location>
</feature>
<feature type="compositionally biased region" description="Low complexity" evidence="3">
    <location>
        <begin position="16"/>
        <end position="26"/>
    </location>
</feature>
<feature type="binding site" evidence="1">
    <location>
        <position position="55"/>
    </location>
    <ligand>
        <name>Zn(2+)</name>
        <dbReference type="ChEBI" id="CHEBI:29105"/>
        <label>1</label>
    </ligand>
</feature>
<feature type="binding site" evidence="1">
    <location>
        <position position="58"/>
    </location>
    <ligand>
        <name>Zn(2+)</name>
        <dbReference type="ChEBI" id="CHEBI:29105"/>
        <label>1</label>
    </ligand>
</feature>
<feature type="binding site" evidence="1">
    <location>
        <position position="66"/>
    </location>
    <ligand>
        <name>Zn(2+)</name>
        <dbReference type="ChEBI" id="CHEBI:29105"/>
        <label>2</label>
    </ligand>
</feature>
<feature type="binding site" evidence="1">
    <location>
        <position position="69"/>
    </location>
    <ligand>
        <name>Zn(2+)</name>
        <dbReference type="ChEBI" id="CHEBI:29105"/>
        <label>2</label>
    </ligand>
</feature>
<feature type="binding site" evidence="1">
    <location>
        <position position="81"/>
    </location>
    <ligand>
        <name>Zn(2+)</name>
        <dbReference type="ChEBI" id="CHEBI:29105"/>
        <label>2</label>
    </ligand>
</feature>
<feature type="binding site" evidence="1">
    <location>
        <position position="88"/>
    </location>
    <ligand>
        <name>Zn(2+)</name>
        <dbReference type="ChEBI" id="CHEBI:29105"/>
        <label>3</label>
    </ligand>
</feature>
<feature type="binding site" evidence="1">
    <location>
        <position position="90"/>
    </location>
    <ligand>
        <name>Zn(2+)</name>
        <dbReference type="ChEBI" id="CHEBI:29105"/>
        <label>3</label>
    </ligand>
</feature>
<feature type="binding site" evidence="1">
    <location>
        <position position="93"/>
    </location>
    <ligand>
        <name>Zn(2+)</name>
        <dbReference type="ChEBI" id="CHEBI:29105"/>
        <label>1</label>
    </ligand>
</feature>
<feature type="binding site" evidence="1">
    <location>
        <position position="95"/>
    </location>
    <ligand>
        <name>Zn(2+)</name>
        <dbReference type="ChEBI" id="CHEBI:29105"/>
        <label>2</label>
    </ligand>
</feature>
<feature type="binding site" evidence="1">
    <location>
        <position position="107"/>
    </location>
    <ligand>
        <name>Zn(2+)</name>
        <dbReference type="ChEBI" id="CHEBI:29105"/>
        <label>3</label>
    </ligand>
</feature>
<feature type="binding site" evidence="1">
    <location>
        <position position="110"/>
    </location>
    <ligand>
        <name>Zn(2+)</name>
        <dbReference type="ChEBI" id="CHEBI:29105"/>
        <label>3</label>
    </ligand>
</feature>
<feature type="modified residue" description="Phosphoserine" evidence="13">
    <location>
        <position position="15"/>
    </location>
</feature>
<feature type="mutagenesis site" description="In RBX1-1; temperature-sensitive allele. At 38 degrees Celsius induces defects in ubiquitin ligase activity; when associated with R-81.">
    <original>K</original>
    <variation>R</variation>
    <location>
        <position position="72"/>
    </location>
</feature>
<feature type="mutagenesis site" description="In RBX1-1; temperature-sensitive allele. At 38 degrees Celsius induces defects in ubiquitin ligase activity; when associated with R-72.">
    <original>C</original>
    <variation>R</variation>
    <location>
        <position position="81"/>
    </location>
</feature>
<feature type="mutagenesis site" description="In HRT1-C81Y; defects in ubiquitin ligase activity.">
    <original>C</original>
    <variation>Y</variation>
    <location>
        <position position="81"/>
    </location>
</feature>
<protein>
    <recommendedName>
        <fullName>RING-box protein HRT1</fullName>
        <shortName>RING-box protein 1</shortName>
    </recommendedName>
    <alternativeName>
        <fullName>E3 ubiquitin-protein ligase complex SCF subunit HRT1</fullName>
    </alternativeName>
    <alternativeName>
        <fullName>High level expression reduces Ty3 transposition protein 1</fullName>
    </alternativeName>
    <alternativeName>
        <fullName>Regulator of cullins protein 1</fullName>
    </alternativeName>
</protein>
<organism>
    <name type="scientific">Saccharomyces cerevisiae (strain ATCC 204508 / S288c)</name>
    <name type="common">Baker's yeast</name>
    <dbReference type="NCBI Taxonomy" id="559292"/>
    <lineage>
        <taxon>Eukaryota</taxon>
        <taxon>Fungi</taxon>
        <taxon>Dikarya</taxon>
        <taxon>Ascomycota</taxon>
        <taxon>Saccharomycotina</taxon>
        <taxon>Saccharomycetes</taxon>
        <taxon>Saccharomycetales</taxon>
        <taxon>Saccharomycetaceae</taxon>
        <taxon>Saccharomyces</taxon>
    </lineage>
</organism>
<accession>Q08273</accession>
<accession>D6W1T5</accession>
<sequence>MSNEVDRMDVDEDESQNIAQSSNQSAPVETKKKRFEIKKWTAVAFWSWDIAVDNCAICRNHIMEPCIECQPKAMTDTDNECVAAWGVCNHAFHLHCINKWIKTRDACPLDNQPWQLARCGR</sequence>
<proteinExistence type="evidence at protein level"/>
<reference key="1">
    <citation type="journal article" date="1996" name="Yeast">
        <title>Sequence analysis of a 12 801 bp fragment of the left arm of yeast chromosome XV containing a putative 6-phosphofructo-2-kinase gene, a gene for a possible glycophospholipid-anchored surface protein and six other open reading frames.</title>
        <authorList>
            <person name="Aldea M."/>
            <person name="Piedrafita L."/>
            <person name="Casas C."/>
            <person name="Casamayor A."/>
            <person name="Khalid H."/>
            <person name="Balcells L."/>
            <person name="Arino J."/>
            <person name="Herrero E."/>
        </authorList>
    </citation>
    <scope>NUCLEOTIDE SEQUENCE [GENOMIC DNA]</scope>
    <source>
        <strain>ATCC 96604 / S288c / FY1679</strain>
    </source>
</reference>
<reference key="2">
    <citation type="journal article" date="1997" name="Nature">
        <title>The nucleotide sequence of Saccharomyces cerevisiae chromosome XV.</title>
        <authorList>
            <person name="Dujon B."/>
            <person name="Albermann K."/>
            <person name="Aldea M."/>
            <person name="Alexandraki D."/>
            <person name="Ansorge W."/>
            <person name="Arino J."/>
            <person name="Benes V."/>
            <person name="Bohn C."/>
            <person name="Bolotin-Fukuhara M."/>
            <person name="Bordonne R."/>
            <person name="Boyer J."/>
            <person name="Camasses A."/>
            <person name="Casamayor A."/>
            <person name="Casas C."/>
            <person name="Cheret G."/>
            <person name="Cziepluch C."/>
            <person name="Daignan-Fornier B."/>
            <person name="Dang V.-D."/>
            <person name="de Haan M."/>
            <person name="Delius H."/>
            <person name="Durand P."/>
            <person name="Fairhead C."/>
            <person name="Feldmann H."/>
            <person name="Gaillon L."/>
            <person name="Galisson F."/>
            <person name="Gamo F.-J."/>
            <person name="Gancedo C."/>
            <person name="Goffeau A."/>
            <person name="Goulding S.E."/>
            <person name="Grivell L.A."/>
            <person name="Habbig B."/>
            <person name="Hand N.J."/>
            <person name="Hani J."/>
            <person name="Hattenhorst U."/>
            <person name="Hebling U."/>
            <person name="Hernando Y."/>
            <person name="Herrero E."/>
            <person name="Heumann K."/>
            <person name="Hiesel R."/>
            <person name="Hilger F."/>
            <person name="Hofmann B."/>
            <person name="Hollenberg C.P."/>
            <person name="Hughes B."/>
            <person name="Jauniaux J.-C."/>
            <person name="Kalogeropoulos A."/>
            <person name="Katsoulou C."/>
            <person name="Kordes E."/>
            <person name="Lafuente M.J."/>
            <person name="Landt O."/>
            <person name="Louis E.J."/>
            <person name="Maarse A.C."/>
            <person name="Madania A."/>
            <person name="Mannhaupt G."/>
            <person name="Marck C."/>
            <person name="Martin R.P."/>
            <person name="Mewes H.-W."/>
            <person name="Michaux G."/>
            <person name="Paces V."/>
            <person name="Parle-McDermott A.G."/>
            <person name="Pearson B.M."/>
            <person name="Perrin A."/>
            <person name="Pettersson B."/>
            <person name="Poch O."/>
            <person name="Pohl T.M."/>
            <person name="Poirey R."/>
            <person name="Portetelle D."/>
            <person name="Pujol A."/>
            <person name="Purnelle B."/>
            <person name="Ramezani Rad M."/>
            <person name="Rechmann S."/>
            <person name="Schwager C."/>
            <person name="Schweizer M."/>
            <person name="Sor F."/>
            <person name="Sterky F."/>
            <person name="Tarassov I.A."/>
            <person name="Teodoru C."/>
            <person name="Tettelin H."/>
            <person name="Thierry A."/>
            <person name="Tobiasch E."/>
            <person name="Tzermia M."/>
            <person name="Uhlen M."/>
            <person name="Unseld M."/>
            <person name="Valens M."/>
            <person name="Vandenbol M."/>
            <person name="Vetter I."/>
            <person name="Vlcek C."/>
            <person name="Voet M."/>
            <person name="Volckaert G."/>
            <person name="Voss H."/>
            <person name="Wambutt R."/>
            <person name="Wedler H."/>
            <person name="Wiemann S."/>
            <person name="Winsor B."/>
            <person name="Wolfe K.H."/>
            <person name="Zollner A."/>
            <person name="Zumstein E."/>
            <person name="Kleine K."/>
        </authorList>
    </citation>
    <scope>NUCLEOTIDE SEQUENCE [LARGE SCALE GENOMIC DNA]</scope>
    <source>
        <strain>ATCC 204508 / S288c</strain>
    </source>
</reference>
<reference key="3">
    <citation type="journal article" date="2014" name="G3 (Bethesda)">
        <title>The reference genome sequence of Saccharomyces cerevisiae: Then and now.</title>
        <authorList>
            <person name="Engel S.R."/>
            <person name="Dietrich F.S."/>
            <person name="Fisk D.G."/>
            <person name="Binkley G."/>
            <person name="Balakrishnan R."/>
            <person name="Costanzo M.C."/>
            <person name="Dwight S.S."/>
            <person name="Hitz B.C."/>
            <person name="Karra K."/>
            <person name="Nash R.S."/>
            <person name="Weng S."/>
            <person name="Wong E.D."/>
            <person name="Lloyd P."/>
            <person name="Skrzypek M.S."/>
            <person name="Miyasato S.R."/>
            <person name="Simison M."/>
            <person name="Cherry J.M."/>
        </authorList>
    </citation>
    <scope>GENOME REANNOTATION</scope>
    <source>
        <strain>ATCC 204508 / S288c</strain>
    </source>
</reference>
<reference key="4">
    <citation type="journal article" date="1999" name="Genes Dev.">
        <title>Cdc53/cullin and the essential Hrt1 RING-H2 subunit of SCF define a ubiquitin ligase module that activates the E2 enzyme Cdc34.</title>
        <authorList>
            <person name="Seol J.H."/>
            <person name="Feldman R.M.R."/>
            <person name="Zachariae W."/>
            <person name="Shevchenko A."/>
            <person name="Correll C.C."/>
            <person name="Lyapina S."/>
            <person name="Chi Y."/>
            <person name="Galova M."/>
            <person name="Claypool J."/>
            <person name="Sandmeyer S."/>
            <person name="Nasmyth K."/>
            <person name="Shevchenko A."/>
            <person name="Deshaies R.J."/>
        </authorList>
    </citation>
    <scope>PROTEIN SEQUENCE OF 8-31</scope>
    <scope>FUNCTION</scope>
    <scope>INTERACTION WITH CDC53; CDC4 AND CDC34/UBC3</scope>
    <scope>IDENTIFICATION IN SCF COMPLEX</scope>
</reference>
<reference key="5">
    <citation type="journal article" date="1999" name="Genes Dev.">
        <title>The Rbx1 subunit of SCF and VHL E3 ubiquitin ligase activates Rub1 modification of cullins Cdc53 and Cul2.</title>
        <authorList>
            <person name="Kamura T."/>
            <person name="Conrad M.N."/>
            <person name="Yan Q."/>
            <person name="Conaway R.C."/>
            <person name="Conaway J.W."/>
        </authorList>
    </citation>
    <scope>FUNCTION</scope>
</reference>
<reference key="6">
    <citation type="journal article" date="1999" name="Mol. Cell">
        <title>ROC1, a homolog of APC11, represents a family of cullin partners with an associated ubiquitin ligase activity.</title>
        <authorList>
            <person name="Ohta T."/>
            <person name="Michel J.J."/>
            <person name="Schottelius A.J."/>
            <person name="Xiong Y."/>
        </authorList>
    </citation>
    <scope>INTERACTION WITH CDC53; CUL3 AND RTT101</scope>
</reference>
<reference key="7">
    <citation type="journal article" date="1999" name="Science">
        <title>Rbx1, a component of the VHL tumor suppressor complex and SCF ubiquitin ligase.</title>
        <authorList>
            <person name="Kamura T."/>
            <person name="Koepp D.M."/>
            <person name="Conrad M.N."/>
            <person name="Skowyra D."/>
            <person name="Moreland R.J."/>
            <person name="Iliopoulos O."/>
            <person name="Lane W.S."/>
            <person name="Kaelin W.G. Jr."/>
            <person name="Elledge S.J."/>
            <person name="Conaway R.C."/>
            <person name="Harper J.W."/>
            <person name="Conaway J.W."/>
        </authorList>
    </citation>
    <scope>FUNCTION</scope>
    <scope>INTERACTION WITH CDC53 AND CDC4</scope>
</reference>
<reference key="8">
    <citation type="journal article" date="1999" name="Science">
        <title>Reconstitution of G1 cyclin ubiquitination with complexes containing SCFGrr1 and Rbx1.</title>
        <authorList>
            <person name="Skowyra D."/>
            <person name="Koepp D.M."/>
            <person name="Kamura T."/>
            <person name="Conrad M.N."/>
            <person name="Conaway R.C."/>
            <person name="Conaway J.W."/>
            <person name="Elledge S.J."/>
            <person name="Harper J.W."/>
        </authorList>
    </citation>
    <scope>IDENTIFICATION IN SCF COMPLEX</scope>
    <scope>INTERACTION WITH CDC34/UBC3 AND CDC4</scope>
    <scope>MUTANT RBX1-1</scope>
</reference>
<reference key="9">
    <citation type="journal article" date="2000" name="Genetics">
        <title>Isolation and characterization of HRT1 using a genetic screen for mutants unable to degrade Gic2p in Saccharomyces cerevisiae.</title>
        <authorList>
            <person name="Blondel M."/>
            <person name="Galan J.-M."/>
            <person name="Peter M."/>
        </authorList>
    </citation>
    <scope>SUBCELLULAR LOCATION</scope>
    <scope>MUTANT HRT1-C81Y</scope>
</reference>
<reference key="10">
    <citation type="journal article" date="2003" name="J. Biol. Chem.">
        <title>A role for Saccharomyces cerevisiae Cul8 ubiquitin ligase in proper anaphase progression.</title>
        <authorList>
            <person name="Michel J.J."/>
            <person name="McCarville J.F."/>
            <person name="Xiong Y."/>
        </authorList>
    </citation>
    <scope>FUNCTION</scope>
    <scope>INTERACTION WITH CUL3 AND RTT101</scope>
</reference>
<reference key="11">
    <citation type="journal article" date="2007" name="Mol. Cell. Biol.">
        <title>ELA1 and CUL3 are required along with ELC1 for RNA polymerase II polyubiquitylation and degradation in DNA-damaged yeast cells.</title>
        <authorList>
            <person name="Ribar B."/>
            <person name="Prakash L."/>
            <person name="Prakash S."/>
        </authorList>
    </citation>
    <scope>FUNCTION</scope>
</reference>
<reference key="12">
    <citation type="journal article" date="2009" name="Science">
        <title>Global analysis of Cdk1 substrate phosphorylation sites provides insights into evolution.</title>
        <authorList>
            <person name="Holt L.J."/>
            <person name="Tuch B.B."/>
            <person name="Villen J."/>
            <person name="Johnson A.D."/>
            <person name="Gygi S.P."/>
            <person name="Morgan D.O."/>
        </authorList>
    </citation>
    <scope>PHOSPHORYLATION [LARGE SCALE ANALYSIS] AT SER-15</scope>
    <scope>IDENTIFICATION BY MASS SPECTROMETRY [LARGE SCALE ANALYSIS]</scope>
</reference>
<name>RBX1_YEAST</name>
<keyword id="KW-0131">Cell cycle</keyword>
<keyword id="KW-0132">Cell division</keyword>
<keyword id="KW-0963">Cytoplasm</keyword>
<keyword id="KW-0903">Direct protein sequencing</keyword>
<keyword id="KW-0227">DNA damage</keyword>
<keyword id="KW-0234">DNA repair</keyword>
<keyword id="KW-0479">Metal-binding</keyword>
<keyword id="KW-0539">Nucleus</keyword>
<keyword id="KW-0597">Phosphoprotein</keyword>
<keyword id="KW-1185">Reference proteome</keyword>
<keyword id="KW-0833">Ubl conjugation pathway</keyword>
<keyword id="KW-0862">Zinc</keyword>
<keyword id="KW-0863">Zinc-finger</keyword>
<dbReference type="EMBL" id="X95465">
    <property type="protein sequence ID" value="CAA64737.1"/>
    <property type="molecule type" value="Genomic_DNA"/>
</dbReference>
<dbReference type="EMBL" id="Z74876">
    <property type="protein sequence ID" value="CAA99155.1"/>
    <property type="molecule type" value="Genomic_DNA"/>
</dbReference>
<dbReference type="EMBL" id="BK006948">
    <property type="protein sequence ID" value="DAA10651.1"/>
    <property type="molecule type" value="Genomic_DNA"/>
</dbReference>
<dbReference type="PIR" id="S66830">
    <property type="entry name" value="S66830"/>
</dbReference>
<dbReference type="RefSeq" id="NP_014508.1">
    <property type="nucleotide sequence ID" value="NM_001183387.1"/>
</dbReference>
<dbReference type="SMR" id="Q08273"/>
<dbReference type="BioGRID" id="34242">
    <property type="interactions" value="103"/>
</dbReference>
<dbReference type="ComplexPortal" id="CPX-1157">
    <property type="entry name" value="CUL8-MMS1-MMS22-ESC4 E3 ubiquitin ligase complex"/>
</dbReference>
<dbReference type="ComplexPortal" id="CPX-1165">
    <property type="entry name" value="CUL8-MMS1-MMS22-CTF4 E3 ubiquitin ligase complex"/>
</dbReference>
<dbReference type="ComplexPortal" id="CPX-1166">
    <property type="entry name" value="CUL8-MMS1-ESC2 E3 ubiquitin ligase complex"/>
</dbReference>
<dbReference type="ComplexPortal" id="CPX-1167">
    <property type="entry name" value="CUL8-MMS1-ORC5 E3 ubiquitin ligase complex"/>
</dbReference>
<dbReference type="ComplexPortal" id="CPX-1837">
    <property type="entry name" value="CUL3-HRT1-ELC1-ELA1 ubiquitin ligase complex"/>
</dbReference>
<dbReference type="ComplexPortal" id="CPX-3234">
    <property type="entry name" value="SCF-Cdc4 ubiquitin ligase complex"/>
</dbReference>
<dbReference type="ComplexPortal" id="CPX-3241">
    <property type="entry name" value="SCF-Grr1 ubiquitin ligase complex"/>
</dbReference>
<dbReference type="ComplexPortal" id="CPX-3242">
    <property type="entry name" value="SCF-Mdm30 ubiquitin ligase complex"/>
</dbReference>
<dbReference type="ComplexPortal" id="CPX-3243">
    <property type="entry name" value="SCF-Ufo1 ubiquitin ligase complex"/>
</dbReference>
<dbReference type="ComplexPortal" id="CPX-3244">
    <property type="entry name" value="SCF-Das1 ubiquitin ligase complex"/>
</dbReference>
<dbReference type="ComplexPortal" id="CPX-3249">
    <property type="entry name" value="SCF-MET30 E3 ubiquitin ligase complex"/>
</dbReference>
<dbReference type="ComplexPortal" id="CPX-3250">
    <property type="entry name" value="SCF-Dia2 ubiquitin ligase complex"/>
</dbReference>
<dbReference type="ComplexPortal" id="CPX-3253">
    <property type="entry name" value="SCF-Ylr352w ubiquitin ligase complex"/>
</dbReference>
<dbReference type="ComplexPortal" id="CPX-3254">
    <property type="entry name" value="SCF-Saf1 ubiquitin ligase complex"/>
</dbReference>
<dbReference type="ComplexPortal" id="CPX-3255">
    <property type="entry name" value="SCF-Hrt3 ubiquitin ligase complex"/>
</dbReference>
<dbReference type="ComplexPortal" id="CPX-3681">
    <property type="entry name" value="SCF-Ydr131c ubiquitin ligase complex"/>
</dbReference>
<dbReference type="DIP" id="DIP-1373N"/>
<dbReference type="FunCoup" id="Q08273">
    <property type="interactions" value="1247"/>
</dbReference>
<dbReference type="IntAct" id="Q08273">
    <property type="interactions" value="160"/>
</dbReference>
<dbReference type="MINT" id="Q08273"/>
<dbReference type="STRING" id="4932.YOL133W"/>
<dbReference type="iPTMnet" id="Q08273"/>
<dbReference type="PaxDb" id="4932-YOL133W"/>
<dbReference type="PeptideAtlas" id="Q08273"/>
<dbReference type="EnsemblFungi" id="YOL133W_mRNA">
    <property type="protein sequence ID" value="YOL133W"/>
    <property type="gene ID" value="YOL133W"/>
</dbReference>
<dbReference type="GeneID" id="853986"/>
<dbReference type="KEGG" id="sce:YOL133W"/>
<dbReference type="AGR" id="SGD:S000005493"/>
<dbReference type="SGD" id="S000005493">
    <property type="gene designation" value="HRT1"/>
</dbReference>
<dbReference type="VEuPathDB" id="FungiDB:YOL133W"/>
<dbReference type="eggNOG" id="KOG2930">
    <property type="taxonomic scope" value="Eukaryota"/>
</dbReference>
<dbReference type="GeneTree" id="ENSGT00940000168153"/>
<dbReference type="HOGENOM" id="CLU_115512_2_1_1"/>
<dbReference type="InParanoid" id="Q08273"/>
<dbReference type="OMA" id="DTCVECQ"/>
<dbReference type="OrthoDB" id="8962942at2759"/>
<dbReference type="BioCyc" id="YEAST:G3O-33528-MONOMER"/>
<dbReference type="Reactome" id="R-SCE-6781823">
    <property type="pathway name" value="Formation of TC-NER Pre-Incision Complex"/>
</dbReference>
<dbReference type="Reactome" id="R-SCE-6782135">
    <property type="pathway name" value="Dual incision in TC-NER"/>
</dbReference>
<dbReference type="Reactome" id="R-SCE-6782210">
    <property type="pathway name" value="Gap-filling DNA repair synthesis and ligation in TC-NER"/>
</dbReference>
<dbReference type="Reactome" id="R-SCE-68949">
    <property type="pathway name" value="Orc1 removal from chromatin"/>
</dbReference>
<dbReference type="Reactome" id="R-SCE-8854050">
    <property type="pathway name" value="FBXL7 down-regulates AURKA during mitotic entry and in early mitosis"/>
</dbReference>
<dbReference type="Reactome" id="R-SCE-983168">
    <property type="pathway name" value="Antigen processing: Ubiquitination &amp; Proteasome degradation"/>
</dbReference>
<dbReference type="UniPathway" id="UPA00143"/>
<dbReference type="BioGRID-ORCS" id="853986">
    <property type="hits" value="8 hits in 10 CRISPR screens"/>
</dbReference>
<dbReference type="CD-CODE" id="BDAE0F88">
    <property type="entry name" value="Nucleolus"/>
</dbReference>
<dbReference type="PRO" id="PR:Q08273"/>
<dbReference type="Proteomes" id="UP000002311">
    <property type="component" value="Chromosome XV"/>
</dbReference>
<dbReference type="RNAct" id="Q08273">
    <property type="molecule type" value="protein"/>
</dbReference>
<dbReference type="GO" id="GO:0000781">
    <property type="term" value="C:chromosome, telomeric region"/>
    <property type="evidence" value="ECO:0007669"/>
    <property type="project" value="GOC"/>
</dbReference>
<dbReference type="GO" id="GO:0031463">
    <property type="term" value="C:Cul3-RING ubiquitin ligase complex"/>
    <property type="evidence" value="ECO:0000314"/>
    <property type="project" value="SGD"/>
</dbReference>
<dbReference type="GO" id="GO:0035361">
    <property type="term" value="C:Cul8-RING ubiquitin ligase complex"/>
    <property type="evidence" value="ECO:0000314"/>
    <property type="project" value="SGD"/>
</dbReference>
<dbReference type="GO" id="GO:0031461">
    <property type="term" value="C:cullin-RING ubiquitin ligase complex"/>
    <property type="evidence" value="ECO:0000318"/>
    <property type="project" value="GO_Central"/>
</dbReference>
<dbReference type="GO" id="GO:0005737">
    <property type="term" value="C:cytoplasm"/>
    <property type="evidence" value="ECO:0000314"/>
    <property type="project" value="SGD"/>
</dbReference>
<dbReference type="GO" id="GO:0005634">
    <property type="term" value="C:nucleus"/>
    <property type="evidence" value="ECO:0000314"/>
    <property type="project" value="SGD"/>
</dbReference>
<dbReference type="GO" id="GO:0019005">
    <property type="term" value="C:SCF ubiquitin ligase complex"/>
    <property type="evidence" value="ECO:0000314"/>
    <property type="project" value="SGD"/>
</dbReference>
<dbReference type="GO" id="GO:0097602">
    <property type="term" value="F:cullin family protein binding"/>
    <property type="evidence" value="ECO:0000318"/>
    <property type="project" value="GO_Central"/>
</dbReference>
<dbReference type="GO" id="GO:0030674">
    <property type="term" value="F:protein-macromolecule adaptor activity"/>
    <property type="evidence" value="ECO:0000314"/>
    <property type="project" value="SGD"/>
</dbReference>
<dbReference type="GO" id="GO:0061630">
    <property type="term" value="F:ubiquitin protein ligase activity"/>
    <property type="evidence" value="ECO:0000318"/>
    <property type="project" value="GO_Central"/>
</dbReference>
<dbReference type="GO" id="GO:0008270">
    <property type="term" value="F:zinc ion binding"/>
    <property type="evidence" value="ECO:0007669"/>
    <property type="project" value="UniProtKB-KW"/>
</dbReference>
<dbReference type="GO" id="GO:0051301">
    <property type="term" value="P:cell division"/>
    <property type="evidence" value="ECO:0007669"/>
    <property type="project" value="UniProtKB-KW"/>
</dbReference>
<dbReference type="GO" id="GO:0071406">
    <property type="term" value="P:cellular response to methylmercury"/>
    <property type="evidence" value="ECO:0000303"/>
    <property type="project" value="ComplexPortal"/>
</dbReference>
<dbReference type="GO" id="GO:0000082">
    <property type="term" value="P:G1/S transition of mitotic cell cycle"/>
    <property type="evidence" value="ECO:0000314"/>
    <property type="project" value="ComplexPortal"/>
</dbReference>
<dbReference type="GO" id="GO:0000086">
    <property type="term" value="P:G2/M transition of mitotic cell cycle"/>
    <property type="evidence" value="ECO:0000303"/>
    <property type="project" value="ComplexPortal"/>
</dbReference>
<dbReference type="GO" id="GO:0031507">
    <property type="term" value="P:heterochromatin formation"/>
    <property type="evidence" value="ECO:0000303"/>
    <property type="project" value="ComplexPortal"/>
</dbReference>
<dbReference type="GO" id="GO:0008053">
    <property type="term" value="P:mitochondrial fusion"/>
    <property type="evidence" value="ECO:0000303"/>
    <property type="project" value="ComplexPortal"/>
</dbReference>
<dbReference type="GO" id="GO:0031573">
    <property type="term" value="P:mitotic intra-S DNA damage checkpoint signaling"/>
    <property type="evidence" value="ECO:0000303"/>
    <property type="project" value="ComplexPortal"/>
</dbReference>
<dbReference type="GO" id="GO:0006334">
    <property type="term" value="P:nucleosome assembly"/>
    <property type="evidence" value="ECO:0000303"/>
    <property type="project" value="ComplexPortal"/>
</dbReference>
<dbReference type="GO" id="GO:0006289">
    <property type="term" value="P:nucleotide-excision repair"/>
    <property type="evidence" value="ECO:0000303"/>
    <property type="project" value="ComplexPortal"/>
</dbReference>
<dbReference type="GO" id="GO:0010828">
    <property type="term" value="P:positive regulation of D-glucose transmembrane transport"/>
    <property type="evidence" value="ECO:0000314"/>
    <property type="project" value="ComplexPortal"/>
</dbReference>
<dbReference type="GO" id="GO:0016567">
    <property type="term" value="P:protein ubiquitination"/>
    <property type="evidence" value="ECO:0000318"/>
    <property type="project" value="GO_Central"/>
</dbReference>
<dbReference type="GO" id="GO:0006275">
    <property type="term" value="P:regulation of DNA replication"/>
    <property type="evidence" value="ECO:0000303"/>
    <property type="project" value="ComplexPortal"/>
</dbReference>
<dbReference type="GO" id="GO:0019222">
    <property type="term" value="P:regulation of metabolic process"/>
    <property type="evidence" value="ECO:0000303"/>
    <property type="project" value="ComplexPortal"/>
</dbReference>
<dbReference type="GO" id="GO:0007346">
    <property type="term" value="P:regulation of mitotic cell cycle"/>
    <property type="evidence" value="ECO:0000303"/>
    <property type="project" value="ComplexPortal"/>
</dbReference>
<dbReference type="GO" id="GO:0031335">
    <property type="term" value="P:regulation of sulfur amino acid metabolic process"/>
    <property type="evidence" value="ECO:0000303"/>
    <property type="project" value="ComplexPortal"/>
</dbReference>
<dbReference type="GO" id="GO:0000409">
    <property type="term" value="P:regulation of transcription by galactose"/>
    <property type="evidence" value="ECO:0000303"/>
    <property type="project" value="ComplexPortal"/>
</dbReference>
<dbReference type="GO" id="GO:0031146">
    <property type="term" value="P:SCF-dependent proteasomal ubiquitin-dependent protein catabolic process"/>
    <property type="evidence" value="ECO:0000314"/>
    <property type="project" value="SGD"/>
</dbReference>
<dbReference type="GO" id="GO:0030466">
    <property type="term" value="P:silent mating-type cassette heterochromatin formation"/>
    <property type="evidence" value="ECO:0000314"/>
    <property type="project" value="ComplexPortal"/>
</dbReference>
<dbReference type="GO" id="GO:0031509">
    <property type="term" value="P:subtelomeric heterochromatin formation"/>
    <property type="evidence" value="ECO:0000303"/>
    <property type="project" value="ComplexPortal"/>
</dbReference>
<dbReference type="GO" id="GO:0006511">
    <property type="term" value="P:ubiquitin-dependent protein catabolic process"/>
    <property type="evidence" value="ECO:0000314"/>
    <property type="project" value="SGD"/>
</dbReference>
<dbReference type="CDD" id="cd16485">
    <property type="entry name" value="mRING-H2-C3H2C2D_RBX1"/>
    <property type="match status" value="1"/>
</dbReference>
<dbReference type="FunFam" id="3.30.40.10:FF:000273">
    <property type="entry name" value="E3 ubiquitin-protein ligase RBX1"/>
    <property type="match status" value="1"/>
</dbReference>
<dbReference type="Gene3D" id="3.30.40.10">
    <property type="entry name" value="Zinc/RING finger domain, C3HC4 (zinc finger)"/>
    <property type="match status" value="1"/>
</dbReference>
<dbReference type="InterPro" id="IPR051031">
    <property type="entry name" value="RING-box_E3_Ubiquitin_Ligase"/>
</dbReference>
<dbReference type="InterPro" id="IPR001841">
    <property type="entry name" value="Znf_RING"/>
</dbReference>
<dbReference type="InterPro" id="IPR013083">
    <property type="entry name" value="Znf_RING/FYVE/PHD"/>
</dbReference>
<dbReference type="InterPro" id="IPR024766">
    <property type="entry name" value="Znf_RING_H2"/>
</dbReference>
<dbReference type="PANTHER" id="PTHR11210">
    <property type="entry name" value="RING BOX"/>
    <property type="match status" value="1"/>
</dbReference>
<dbReference type="Pfam" id="PF12678">
    <property type="entry name" value="zf-rbx1"/>
    <property type="match status" value="1"/>
</dbReference>
<dbReference type="SUPFAM" id="SSF57850">
    <property type="entry name" value="RING/U-box"/>
    <property type="match status" value="1"/>
</dbReference>
<dbReference type="PROSITE" id="PS50089">
    <property type="entry name" value="ZF_RING_2"/>
    <property type="match status" value="1"/>
</dbReference>
<comment type="function">
    <text evidence="4 7 8 10 11">Core component of multiple cullin-RING-based E3 ubiquitin-protein ligase complexes (CRLs), which mediate the ubiquitination of target proteins. Recruits the E2 ubiquitin-conjugating enzyme CDC34/UBC3 to the complex and brings it into close proximity to the substrate. Also stimulates CDC34/UBC3 autoubiquitination and promotes the neddylation of CDC53 and RTT101. Component of the SCF(CDC4) ubiquitin ligase required for ubiquitination of the cyclin-dependent kinase inhibitor SIC1 and for the G1-to-S phase transition. Component of the RTT101(MMS1-MMS22) ubiquitin ligase that promotes fork progression through damaged DNA or natural pause sites. Component of the CRL3(ELA1) ubiquitin ligase required for ubiquitination of RPB1, the largest subunit of RNA polymerase II (Pol II), which targets Pol II for proteasomal degradation in DNA-damaged cells.</text>
</comment>
<comment type="pathway">
    <text>Protein modification; protein ubiquitination.</text>
</comment>
<comment type="subunit">
    <text evidence="4 5 6 7 10">Component of multiple cullin-RING ligases (CRLs) composed of 4 subunits: the RING protein HRT1, a cullin, a linker protein, and one of many alternative substrate receptors. Component of SCF E3 ubiquitin ligase complexes containing the cullin CDC53, the linker protein SKP1/CBF3D, and substrate receptors containing F-box motifs like DAS1 or GRR1. Component of RTT101(MMS1) E3 ubiquitin ligase complexes containing the cullin RTT101, the linker protein MMS1, and substrate receptors belonging to a protein family described as DCAF (DDB1- and CUL4-associated factor) like MMS22. Component of CRL3 E3 ubiquitin ligase complexes containing the cullin CUL3, the linker protein ELC1, and substrate receptors containing SOCS-box motifs like ELA1. Interacts with CDC53, CUL3, RTT101, CDC4 and CDC34/UBC3.</text>
</comment>
<comment type="interaction">
    <interactant intactId="EBI-31686">
        <id>Q08273</id>
    </interactant>
    <interactant intactId="EBI-4434">
        <id>P07834</id>
        <label>CDC4</label>
    </interactant>
    <organismsDiffer>false</organismsDiffer>
    <experiments>3</experiments>
</comment>
<comment type="interaction">
    <interactant intactId="EBI-31686">
        <id>Q08273</id>
    </interactant>
    <interactant intactId="EBI-4321">
        <id>Q12018</id>
        <label>CDC53</label>
    </interactant>
    <organismsDiffer>false</organismsDiffer>
    <experiments>9</experiments>
</comment>
<comment type="interaction">
    <interactant intactId="EBI-31686">
        <id>Q08273</id>
    </interactant>
    <interactant intactId="EBI-23065">
        <id>P53202</id>
        <label>CUL3</label>
    </interactant>
    <organismsDiffer>false</organismsDiffer>
    <experiments>3</experiments>
</comment>
<comment type="interaction">
    <interactant intactId="EBI-31686">
        <id>Q08273</id>
    </interactant>
    <interactant intactId="EBI-38894">
        <id>Q06211</id>
        <label>MMS1</label>
    </interactant>
    <organismsDiffer>false</organismsDiffer>
    <experiments>3</experiments>
</comment>
<comment type="interaction">
    <interactant intactId="EBI-31686">
        <id>Q08273</id>
    </interactant>
    <interactant intactId="EBI-25861">
        <id>P47050</id>
        <label>RTT101</label>
    </interactant>
    <organismsDiffer>false</organismsDiffer>
    <experiments>3</experiments>
</comment>
<comment type="interaction">
    <interactant intactId="EBI-31686">
        <id>Q08273</id>
    </interactant>
    <interactant intactId="EBI-21172">
        <id>P38352</id>
        <label>SAF1</label>
    </interactant>
    <organismsDiffer>false</organismsDiffer>
    <experiments>2</experiments>
</comment>
<comment type="interaction">
    <interactant intactId="EBI-31686">
        <id>Q08273</id>
    </interactant>
    <interactant intactId="EBI-20777">
        <id>P14680</id>
        <label>YAK1</label>
    </interactant>
    <organismsDiffer>false</organismsDiffer>
    <experiments>3</experiments>
</comment>
<comment type="interaction">
    <interactant intactId="EBI-31686">
        <id>Q08273</id>
    </interactant>
    <interactant intactId="EBI-23796">
        <id>P53169</id>
        <label>YBP2</label>
    </interactant>
    <organismsDiffer>false</organismsDiffer>
    <experiments>3</experiments>
</comment>
<comment type="interaction">
    <interactant intactId="EBI-31686">
        <id>Q08273</id>
    </interactant>
    <interactant intactId="EBI-24911">
        <id>P40560</id>
        <label>YIL001W</label>
    </interactant>
    <organismsDiffer>false</organismsDiffer>
    <experiments>5</experiments>
</comment>
<comment type="subcellular location">
    <subcellularLocation>
        <location evidence="9">Cytoplasm</location>
    </subcellularLocation>
    <subcellularLocation>
        <location evidence="9">Nucleus</location>
    </subcellularLocation>
</comment>
<comment type="domain">
    <text>The RING-type zinc finger domain is essential for ubiquitin ligase activity.</text>
</comment>
<comment type="similarity">
    <text evidence="12">Belongs to the RING-box family.</text>
</comment>
<comment type="caution">
    <text evidence="12">It is uncertain whether Met-1 or Met-8 is the initiator.</text>
</comment>
<evidence type="ECO:0000250" key="1">
    <source>
        <dbReference type="UniProtKB" id="P62878"/>
    </source>
</evidence>
<evidence type="ECO:0000255" key="2">
    <source>
        <dbReference type="PROSITE-ProRule" id="PRU00175"/>
    </source>
</evidence>
<evidence type="ECO:0000256" key="3">
    <source>
        <dbReference type="SAM" id="MobiDB-lite"/>
    </source>
</evidence>
<evidence type="ECO:0000269" key="4">
    <source>
    </source>
</evidence>
<evidence type="ECO:0000269" key="5">
    <source>
    </source>
</evidence>
<evidence type="ECO:0000269" key="6">
    <source>
    </source>
</evidence>
<evidence type="ECO:0000269" key="7">
    <source>
    </source>
</evidence>
<evidence type="ECO:0000269" key="8">
    <source>
    </source>
</evidence>
<evidence type="ECO:0000269" key="9">
    <source>
    </source>
</evidence>
<evidence type="ECO:0000269" key="10">
    <source>
    </source>
</evidence>
<evidence type="ECO:0000269" key="11">
    <source>
    </source>
</evidence>
<evidence type="ECO:0000305" key="12"/>
<evidence type="ECO:0007744" key="13">
    <source>
    </source>
</evidence>